<protein>
    <recommendedName>
        <fullName evidence="1">Phosphopantetheine adenylyltransferase</fullName>
        <ecNumber evidence="1">2.7.7.3</ecNumber>
    </recommendedName>
    <alternativeName>
        <fullName evidence="1">Dephospho-CoA pyrophosphorylase</fullName>
    </alternativeName>
    <alternativeName>
        <fullName evidence="1">Pantetheine-phosphate adenylyltransferase</fullName>
        <shortName evidence="1">PPAT</shortName>
    </alternativeName>
</protein>
<dbReference type="EC" id="2.7.7.3" evidence="1"/>
<dbReference type="EMBL" id="CP000034">
    <property type="protein sequence ID" value="ABB63982.1"/>
    <property type="molecule type" value="Genomic_DNA"/>
</dbReference>
<dbReference type="RefSeq" id="WP_001171879.1">
    <property type="nucleotide sequence ID" value="NC_007606.1"/>
</dbReference>
<dbReference type="RefSeq" id="YP_405473.1">
    <property type="nucleotide sequence ID" value="NC_007606.1"/>
</dbReference>
<dbReference type="SMR" id="Q329M3"/>
<dbReference type="STRING" id="300267.SDY_4064"/>
<dbReference type="EnsemblBacteria" id="ABB63982">
    <property type="protein sequence ID" value="ABB63982"/>
    <property type="gene ID" value="SDY_4064"/>
</dbReference>
<dbReference type="KEGG" id="sdy:SDY_4064"/>
<dbReference type="PATRIC" id="fig|300267.13.peg.4780"/>
<dbReference type="HOGENOM" id="CLU_100149_0_1_6"/>
<dbReference type="UniPathway" id="UPA00241">
    <property type="reaction ID" value="UER00355"/>
</dbReference>
<dbReference type="Proteomes" id="UP000002716">
    <property type="component" value="Chromosome"/>
</dbReference>
<dbReference type="GO" id="GO:0005737">
    <property type="term" value="C:cytoplasm"/>
    <property type="evidence" value="ECO:0007669"/>
    <property type="project" value="UniProtKB-SubCell"/>
</dbReference>
<dbReference type="GO" id="GO:0005524">
    <property type="term" value="F:ATP binding"/>
    <property type="evidence" value="ECO:0007669"/>
    <property type="project" value="UniProtKB-KW"/>
</dbReference>
<dbReference type="GO" id="GO:0004595">
    <property type="term" value="F:pantetheine-phosphate adenylyltransferase activity"/>
    <property type="evidence" value="ECO:0007669"/>
    <property type="project" value="UniProtKB-UniRule"/>
</dbReference>
<dbReference type="GO" id="GO:0015937">
    <property type="term" value="P:coenzyme A biosynthetic process"/>
    <property type="evidence" value="ECO:0007669"/>
    <property type="project" value="UniProtKB-UniRule"/>
</dbReference>
<dbReference type="CDD" id="cd02163">
    <property type="entry name" value="PPAT"/>
    <property type="match status" value="1"/>
</dbReference>
<dbReference type="FunFam" id="3.40.50.620:FF:000012">
    <property type="entry name" value="Phosphopantetheine adenylyltransferase"/>
    <property type="match status" value="1"/>
</dbReference>
<dbReference type="Gene3D" id="3.40.50.620">
    <property type="entry name" value="HUPs"/>
    <property type="match status" value="1"/>
</dbReference>
<dbReference type="HAMAP" id="MF_00151">
    <property type="entry name" value="PPAT_bact"/>
    <property type="match status" value="1"/>
</dbReference>
<dbReference type="InterPro" id="IPR004821">
    <property type="entry name" value="Cyt_trans-like"/>
</dbReference>
<dbReference type="InterPro" id="IPR001980">
    <property type="entry name" value="PPAT"/>
</dbReference>
<dbReference type="InterPro" id="IPR014729">
    <property type="entry name" value="Rossmann-like_a/b/a_fold"/>
</dbReference>
<dbReference type="NCBIfam" id="TIGR01510">
    <property type="entry name" value="coaD_prev_kdtB"/>
    <property type="match status" value="1"/>
</dbReference>
<dbReference type="NCBIfam" id="TIGR00125">
    <property type="entry name" value="cyt_tran_rel"/>
    <property type="match status" value="1"/>
</dbReference>
<dbReference type="PANTHER" id="PTHR21342">
    <property type="entry name" value="PHOSPHOPANTETHEINE ADENYLYLTRANSFERASE"/>
    <property type="match status" value="1"/>
</dbReference>
<dbReference type="PANTHER" id="PTHR21342:SF1">
    <property type="entry name" value="PHOSPHOPANTETHEINE ADENYLYLTRANSFERASE"/>
    <property type="match status" value="1"/>
</dbReference>
<dbReference type="Pfam" id="PF01467">
    <property type="entry name" value="CTP_transf_like"/>
    <property type="match status" value="1"/>
</dbReference>
<dbReference type="PRINTS" id="PR01020">
    <property type="entry name" value="LPSBIOSNTHSS"/>
</dbReference>
<dbReference type="SUPFAM" id="SSF52374">
    <property type="entry name" value="Nucleotidylyl transferase"/>
    <property type="match status" value="1"/>
</dbReference>
<keyword id="KW-0067">ATP-binding</keyword>
<keyword id="KW-0173">Coenzyme A biosynthesis</keyword>
<keyword id="KW-0963">Cytoplasm</keyword>
<keyword id="KW-0460">Magnesium</keyword>
<keyword id="KW-0547">Nucleotide-binding</keyword>
<keyword id="KW-0548">Nucleotidyltransferase</keyword>
<keyword id="KW-1185">Reference proteome</keyword>
<keyword id="KW-0808">Transferase</keyword>
<name>COAD_SHIDS</name>
<evidence type="ECO:0000255" key="1">
    <source>
        <dbReference type="HAMAP-Rule" id="MF_00151"/>
    </source>
</evidence>
<feature type="chain" id="PRO_1000011239" description="Phosphopantetheine adenylyltransferase">
    <location>
        <begin position="1"/>
        <end position="159"/>
    </location>
</feature>
<feature type="binding site" evidence="1">
    <location>
        <begin position="10"/>
        <end position="11"/>
    </location>
    <ligand>
        <name>ATP</name>
        <dbReference type="ChEBI" id="CHEBI:30616"/>
    </ligand>
</feature>
<feature type="binding site" evidence="1">
    <location>
        <position position="10"/>
    </location>
    <ligand>
        <name>substrate</name>
    </ligand>
</feature>
<feature type="binding site" evidence="1">
    <location>
        <position position="18"/>
    </location>
    <ligand>
        <name>ATP</name>
        <dbReference type="ChEBI" id="CHEBI:30616"/>
    </ligand>
</feature>
<feature type="binding site" evidence="1">
    <location>
        <position position="42"/>
    </location>
    <ligand>
        <name>substrate</name>
    </ligand>
</feature>
<feature type="binding site" evidence="1">
    <location>
        <position position="74"/>
    </location>
    <ligand>
        <name>substrate</name>
    </ligand>
</feature>
<feature type="binding site" evidence="1">
    <location>
        <position position="88"/>
    </location>
    <ligand>
        <name>substrate</name>
    </ligand>
</feature>
<feature type="binding site" evidence="1">
    <location>
        <begin position="89"/>
        <end position="91"/>
    </location>
    <ligand>
        <name>ATP</name>
        <dbReference type="ChEBI" id="CHEBI:30616"/>
    </ligand>
</feature>
<feature type="binding site" evidence="1">
    <location>
        <position position="99"/>
    </location>
    <ligand>
        <name>ATP</name>
        <dbReference type="ChEBI" id="CHEBI:30616"/>
    </ligand>
</feature>
<feature type="binding site" evidence="1">
    <location>
        <begin position="124"/>
        <end position="130"/>
    </location>
    <ligand>
        <name>ATP</name>
        <dbReference type="ChEBI" id="CHEBI:30616"/>
    </ligand>
</feature>
<feature type="site" description="Transition state stabilizer" evidence="1">
    <location>
        <position position="18"/>
    </location>
</feature>
<comment type="function">
    <text evidence="1">Reversibly transfers an adenylyl group from ATP to 4'-phosphopantetheine, yielding dephospho-CoA (dPCoA) and pyrophosphate.</text>
</comment>
<comment type="catalytic activity">
    <reaction evidence="1">
        <text>(R)-4'-phosphopantetheine + ATP + H(+) = 3'-dephospho-CoA + diphosphate</text>
        <dbReference type="Rhea" id="RHEA:19801"/>
        <dbReference type="ChEBI" id="CHEBI:15378"/>
        <dbReference type="ChEBI" id="CHEBI:30616"/>
        <dbReference type="ChEBI" id="CHEBI:33019"/>
        <dbReference type="ChEBI" id="CHEBI:57328"/>
        <dbReference type="ChEBI" id="CHEBI:61723"/>
        <dbReference type="EC" id="2.7.7.3"/>
    </reaction>
</comment>
<comment type="cofactor">
    <cofactor evidence="1">
        <name>Mg(2+)</name>
        <dbReference type="ChEBI" id="CHEBI:18420"/>
    </cofactor>
</comment>
<comment type="pathway">
    <text evidence="1">Cofactor biosynthesis; coenzyme A biosynthesis; CoA from (R)-pantothenate: step 4/5.</text>
</comment>
<comment type="subunit">
    <text evidence="1">Homohexamer.</text>
</comment>
<comment type="subcellular location">
    <subcellularLocation>
        <location evidence="1">Cytoplasm</location>
    </subcellularLocation>
</comment>
<comment type="similarity">
    <text evidence="1">Belongs to the bacterial CoaD family.</text>
</comment>
<gene>
    <name evidence="1" type="primary">coaD</name>
    <name type="ordered locus">SDY_4064</name>
</gene>
<accession>Q329M3</accession>
<organism>
    <name type="scientific">Shigella dysenteriae serotype 1 (strain Sd197)</name>
    <dbReference type="NCBI Taxonomy" id="300267"/>
    <lineage>
        <taxon>Bacteria</taxon>
        <taxon>Pseudomonadati</taxon>
        <taxon>Pseudomonadota</taxon>
        <taxon>Gammaproteobacteria</taxon>
        <taxon>Enterobacterales</taxon>
        <taxon>Enterobacteriaceae</taxon>
        <taxon>Shigella</taxon>
    </lineage>
</organism>
<sequence length="159" mass="17925">MQKRAIYPGTFDPITNGHIDIVTRATQMFDHVILAIAASPSKKTMFTLEERVELAQQATAHLGNVEVVGFSDLMANFARNQHATVLIRGLRAVADFEYEMQLAHMNRHLMPELESVFLMPSKEWSFISSSLVKEVARHQGDVTHFLPENVYQALMAKLA</sequence>
<reference key="1">
    <citation type="journal article" date="2005" name="Nucleic Acids Res.">
        <title>Genome dynamics and diversity of Shigella species, the etiologic agents of bacillary dysentery.</title>
        <authorList>
            <person name="Yang F."/>
            <person name="Yang J."/>
            <person name="Zhang X."/>
            <person name="Chen L."/>
            <person name="Jiang Y."/>
            <person name="Yan Y."/>
            <person name="Tang X."/>
            <person name="Wang J."/>
            <person name="Xiong Z."/>
            <person name="Dong J."/>
            <person name="Xue Y."/>
            <person name="Zhu Y."/>
            <person name="Xu X."/>
            <person name="Sun L."/>
            <person name="Chen S."/>
            <person name="Nie H."/>
            <person name="Peng J."/>
            <person name="Xu J."/>
            <person name="Wang Y."/>
            <person name="Yuan Z."/>
            <person name="Wen Y."/>
            <person name="Yao Z."/>
            <person name="Shen Y."/>
            <person name="Qiang B."/>
            <person name="Hou Y."/>
            <person name="Yu J."/>
            <person name="Jin Q."/>
        </authorList>
    </citation>
    <scope>NUCLEOTIDE SEQUENCE [LARGE SCALE GENOMIC DNA]</scope>
    <source>
        <strain>Sd197</strain>
    </source>
</reference>
<proteinExistence type="inferred from homology"/>